<accession>A1XQX3</accession>
<name>NR1BB_DANRE</name>
<evidence type="ECO:0000255" key="1"/>
<evidence type="ECO:0000255" key="2">
    <source>
        <dbReference type="PROSITE-ProRule" id="PRU00122"/>
    </source>
</evidence>
<evidence type="ECO:0000256" key="3">
    <source>
        <dbReference type="SAM" id="MobiDB-lite"/>
    </source>
</evidence>
<evidence type="ECO:0000269" key="4">
    <source>
    </source>
</evidence>
<evidence type="ECO:0000305" key="5"/>
<dbReference type="EMBL" id="DQ641427">
    <property type="protein sequence ID" value="ABG25164.1"/>
    <property type="molecule type" value="mRNA"/>
</dbReference>
<dbReference type="SMR" id="A1XQX3"/>
<dbReference type="AGR" id="ZFIN:ZDB-GENE-070206-3"/>
<dbReference type="ZFIN" id="ZDB-GENE-070206-3">
    <property type="gene designation" value="nrxn1b"/>
</dbReference>
<dbReference type="Proteomes" id="UP000000437">
    <property type="component" value="Unplaced"/>
</dbReference>
<dbReference type="GO" id="GO:0016020">
    <property type="term" value="C:membrane"/>
    <property type="evidence" value="ECO:0007669"/>
    <property type="project" value="UniProtKB-SubCell"/>
</dbReference>
<dbReference type="GO" id="GO:0007155">
    <property type="term" value="P:cell adhesion"/>
    <property type="evidence" value="ECO:0007669"/>
    <property type="project" value="UniProtKB-KW"/>
</dbReference>
<dbReference type="CDD" id="cd00110">
    <property type="entry name" value="LamG"/>
    <property type="match status" value="1"/>
</dbReference>
<dbReference type="FunFam" id="2.60.120.200:FF:000003">
    <property type="entry name" value="neurexin-1 isoform X1"/>
    <property type="match status" value="1"/>
</dbReference>
<dbReference type="Gene3D" id="2.60.120.200">
    <property type="match status" value="1"/>
</dbReference>
<dbReference type="InterPro" id="IPR013320">
    <property type="entry name" value="ConA-like_dom_sf"/>
</dbReference>
<dbReference type="InterPro" id="IPR001791">
    <property type="entry name" value="Laminin_G"/>
</dbReference>
<dbReference type="InterPro" id="IPR003585">
    <property type="entry name" value="Neurexin-like"/>
</dbReference>
<dbReference type="InterPro" id="IPR050372">
    <property type="entry name" value="Neurexin-related_CASP"/>
</dbReference>
<dbReference type="InterPro" id="IPR027789">
    <property type="entry name" value="Syndecan/Neurexin_dom"/>
</dbReference>
<dbReference type="PANTHER" id="PTHR15036:SF51">
    <property type="entry name" value="NEUREXIN-1"/>
    <property type="match status" value="1"/>
</dbReference>
<dbReference type="PANTHER" id="PTHR15036">
    <property type="entry name" value="PIKACHURIN-LIKE PROTEIN"/>
    <property type="match status" value="1"/>
</dbReference>
<dbReference type="Pfam" id="PF02210">
    <property type="entry name" value="Laminin_G_2"/>
    <property type="match status" value="1"/>
</dbReference>
<dbReference type="Pfam" id="PF01034">
    <property type="entry name" value="Syndecan"/>
    <property type="match status" value="1"/>
</dbReference>
<dbReference type="SMART" id="SM00294">
    <property type="entry name" value="4.1m"/>
    <property type="match status" value="1"/>
</dbReference>
<dbReference type="SMART" id="SM00282">
    <property type="entry name" value="LamG"/>
    <property type="match status" value="1"/>
</dbReference>
<dbReference type="SUPFAM" id="SSF49899">
    <property type="entry name" value="Concanavalin A-like lectins/glucanases"/>
    <property type="match status" value="1"/>
</dbReference>
<dbReference type="PROSITE" id="PS50025">
    <property type="entry name" value="LAM_G_DOMAIN"/>
    <property type="match status" value="1"/>
</dbReference>
<keyword id="KW-0877">Alternative promoter usage</keyword>
<keyword id="KW-0025">Alternative splicing</keyword>
<keyword id="KW-0130">Cell adhesion</keyword>
<keyword id="KW-0472">Membrane</keyword>
<keyword id="KW-1185">Reference proteome</keyword>
<keyword id="KW-0732">Signal</keyword>
<keyword id="KW-0812">Transmembrane</keyword>
<keyword id="KW-1133">Transmembrane helix</keyword>
<protein>
    <recommendedName>
        <fullName>Neurexin-1b-beta</fullName>
    </recommendedName>
    <alternativeName>
        <fullName>Neurexin Ib-beta</fullName>
    </alternativeName>
</protein>
<sequence length="448" mass="49054">MFGGWRLVVWQIFSEIITRRLGFWICLYFAALSVGMISGSEPLVRTRHIQNTHTVPINRSPGSLRAWQAGSTYVFGRQGGVITYSWPPHDRPSTRVDRLALGFSTLMEDATLVRVDSSAGLGDYLKLHIVKGNVVAVFNVGTYDINIEEKAKLVNDGNYHIVRFTRSGGNATLQVDDLPVIERFPPGHIDSHRLGTGRLPYRRLVEESLPKNGRQLTIFNSQMTIRIGGWQKQQVSGFQGQMSGFYYNGLKVFSMAADGDPNVRMEGSVRLVGELQSSSTPHGGATVYQSSVTEISSTTSNTITITYSTPADEQQTTDELLVASAECPSDDEDIDPCEPSSGTLCCFVPPAGPTGPAISSFPGPAEVFRESNGTTGMVVGIVAGAALCILILLYAMYKYRNRDEGSYHVDESRNYICNSNGAALKEKNTADDDSGSKSKKNKNKEYYV</sequence>
<proteinExistence type="evidence at transcript level"/>
<organism>
    <name type="scientific">Danio rerio</name>
    <name type="common">Zebrafish</name>
    <name type="synonym">Brachydanio rerio</name>
    <dbReference type="NCBI Taxonomy" id="7955"/>
    <lineage>
        <taxon>Eukaryota</taxon>
        <taxon>Metazoa</taxon>
        <taxon>Chordata</taxon>
        <taxon>Craniata</taxon>
        <taxon>Vertebrata</taxon>
        <taxon>Euteleostomi</taxon>
        <taxon>Actinopterygii</taxon>
        <taxon>Neopterygii</taxon>
        <taxon>Teleostei</taxon>
        <taxon>Ostariophysi</taxon>
        <taxon>Cypriniformes</taxon>
        <taxon>Danionidae</taxon>
        <taxon>Danioninae</taxon>
        <taxon>Danio</taxon>
    </lineage>
</organism>
<comment type="function">
    <text>Neuronal cell surface protein that may be involved in cell recognition and cell adhesion. May play a role in formation or maintenance of synaptic junctions.</text>
</comment>
<comment type="subcellular location">
    <subcellularLocation>
        <location evidence="5">Membrane</location>
        <topology evidence="5">Single-pass type I membrane protein</topology>
    </subcellularLocation>
</comment>
<comment type="alternative products">
    <event type="alternative promoter"/>
    <event type="alternative splicing"/>
    <isoform>
        <id>A1XQX3-1</id>
        <name>Beta</name>
        <sequence type="displayed"/>
    </isoform>
    <isoform>
        <id>A1XQX2-1</id>
        <name>Alpha</name>
        <sequence type="external"/>
    </isoform>
    <text>A number of isoforms, alpha-type and beta-type are produced by alternative promoter usage. Beta-type isoforms differ from alpha-type isoforms in their N-terminus.</text>
</comment>
<comment type="developmental stage">
    <text evidence="4">After the very early developmental stages, the expression levels decrease and remain relatively constant until around 24 h, with the onset of an increase of expression that continues till the larval stages.</text>
</comment>
<comment type="similarity">
    <text evidence="5">Belongs to the neurexin family.</text>
</comment>
<feature type="signal peptide" evidence="1">
    <location>
        <begin position="1"/>
        <end position="38"/>
    </location>
</feature>
<feature type="chain" id="PRO_0000412540" description="Neurexin-1b-beta">
    <location>
        <begin position="39"/>
        <end position="448"/>
    </location>
</feature>
<feature type="topological domain" description="Extracellular" evidence="1">
    <location>
        <begin position="39"/>
        <end position="375"/>
    </location>
</feature>
<feature type="transmembrane region" description="Helical" evidence="1">
    <location>
        <begin position="376"/>
        <end position="396"/>
    </location>
</feature>
<feature type="topological domain" description="Cytoplasmic" evidence="1">
    <location>
        <begin position="397"/>
        <end position="448"/>
    </location>
</feature>
<feature type="domain" description="Laminin G-like" evidence="2">
    <location>
        <begin position="71"/>
        <end position="269"/>
    </location>
</feature>
<feature type="region of interest" description="Disordered" evidence="3">
    <location>
        <begin position="426"/>
        <end position="448"/>
    </location>
</feature>
<feature type="compositionally biased region" description="Basic and acidic residues" evidence="3">
    <location>
        <begin position="426"/>
        <end position="436"/>
    </location>
</feature>
<gene>
    <name type="primary">nrxn1b</name>
</gene>
<reference key="1">
    <citation type="journal article" date="2007" name="Mol. Biol. Evol.">
        <title>Comparative genome analysis of the neurexin gene family in Danio rerio: insights into their functions and evolution.</title>
        <authorList>
            <person name="Rissone A."/>
            <person name="Monopoli M."/>
            <person name="Beltrame M."/>
            <person name="Bussolino F."/>
            <person name="Cotelli F."/>
            <person name="Arese M."/>
        </authorList>
    </citation>
    <scope>NUCLEOTIDE SEQUENCE [MRNA]</scope>
    <scope>DEVELOPMENTAL STAGE</scope>
    <scope>ALTERNATIVE SPLICING</scope>
</reference>